<comment type="function">
    <text evidence="1">This protein is involved in the repair of mismatches in DNA. It is required for dam-dependent methyl-directed DNA mismatch repair. May act as a 'molecular matchmaker', a protein that promotes the formation of a stable complex between two or more DNA-binding proteins in an ATP-dependent manner without itself being part of a final effector complex.</text>
</comment>
<comment type="similarity">
    <text evidence="1">Belongs to the DNA mismatch repair MutL/HexB family.</text>
</comment>
<accession>Q64NX1</accession>
<gene>
    <name evidence="1" type="primary">mutL</name>
    <name type="ordered locus">BF4069</name>
</gene>
<dbReference type="EMBL" id="AP006841">
    <property type="protein sequence ID" value="BAD50811.1"/>
    <property type="molecule type" value="Genomic_DNA"/>
</dbReference>
<dbReference type="RefSeq" id="WP_010993641.1">
    <property type="nucleotide sequence ID" value="NC_006347.1"/>
</dbReference>
<dbReference type="RefSeq" id="YP_101345.1">
    <property type="nucleotide sequence ID" value="NC_006347.1"/>
</dbReference>
<dbReference type="SMR" id="Q64NX1"/>
<dbReference type="STRING" id="295405.BF4069"/>
<dbReference type="GeneID" id="60367257"/>
<dbReference type="KEGG" id="bfr:BF4069"/>
<dbReference type="PATRIC" id="fig|295405.11.peg.3916"/>
<dbReference type="HOGENOM" id="CLU_004131_4_0_10"/>
<dbReference type="OrthoDB" id="9763467at2"/>
<dbReference type="Proteomes" id="UP000002197">
    <property type="component" value="Chromosome"/>
</dbReference>
<dbReference type="GO" id="GO:0032300">
    <property type="term" value="C:mismatch repair complex"/>
    <property type="evidence" value="ECO:0007669"/>
    <property type="project" value="InterPro"/>
</dbReference>
<dbReference type="GO" id="GO:0005524">
    <property type="term" value="F:ATP binding"/>
    <property type="evidence" value="ECO:0007669"/>
    <property type="project" value="InterPro"/>
</dbReference>
<dbReference type="GO" id="GO:0016887">
    <property type="term" value="F:ATP hydrolysis activity"/>
    <property type="evidence" value="ECO:0007669"/>
    <property type="project" value="InterPro"/>
</dbReference>
<dbReference type="GO" id="GO:0140664">
    <property type="term" value="F:ATP-dependent DNA damage sensor activity"/>
    <property type="evidence" value="ECO:0007669"/>
    <property type="project" value="InterPro"/>
</dbReference>
<dbReference type="GO" id="GO:0030983">
    <property type="term" value="F:mismatched DNA binding"/>
    <property type="evidence" value="ECO:0007669"/>
    <property type="project" value="InterPro"/>
</dbReference>
<dbReference type="GO" id="GO:0006298">
    <property type="term" value="P:mismatch repair"/>
    <property type="evidence" value="ECO:0007669"/>
    <property type="project" value="UniProtKB-UniRule"/>
</dbReference>
<dbReference type="CDD" id="cd16926">
    <property type="entry name" value="HATPase_MutL-MLH-PMS-like"/>
    <property type="match status" value="1"/>
</dbReference>
<dbReference type="CDD" id="cd00782">
    <property type="entry name" value="MutL_Trans"/>
    <property type="match status" value="1"/>
</dbReference>
<dbReference type="FunFam" id="3.30.565.10:FF:000003">
    <property type="entry name" value="DNA mismatch repair endonuclease MutL"/>
    <property type="match status" value="1"/>
</dbReference>
<dbReference type="FunFam" id="3.30.230.10:FF:000071">
    <property type="entry name" value="DNA mismatch repair protein MutL"/>
    <property type="match status" value="1"/>
</dbReference>
<dbReference type="Gene3D" id="3.30.230.10">
    <property type="match status" value="1"/>
</dbReference>
<dbReference type="Gene3D" id="3.30.565.10">
    <property type="entry name" value="Histidine kinase-like ATPase, C-terminal domain"/>
    <property type="match status" value="1"/>
</dbReference>
<dbReference type="Gene3D" id="3.30.1540.20">
    <property type="entry name" value="MutL, C-terminal domain, dimerisation subdomain"/>
    <property type="match status" value="1"/>
</dbReference>
<dbReference type="Gene3D" id="3.30.1370.100">
    <property type="entry name" value="MutL, C-terminal domain, regulatory subdomain"/>
    <property type="match status" value="1"/>
</dbReference>
<dbReference type="HAMAP" id="MF_00149">
    <property type="entry name" value="DNA_mis_repair"/>
    <property type="match status" value="1"/>
</dbReference>
<dbReference type="InterPro" id="IPR014762">
    <property type="entry name" value="DNA_mismatch_repair_CS"/>
</dbReference>
<dbReference type="InterPro" id="IPR020667">
    <property type="entry name" value="DNA_mismatch_repair_MutL"/>
</dbReference>
<dbReference type="InterPro" id="IPR013507">
    <property type="entry name" value="DNA_mismatch_S5_2-like"/>
</dbReference>
<dbReference type="InterPro" id="IPR036890">
    <property type="entry name" value="HATPase_C_sf"/>
</dbReference>
<dbReference type="InterPro" id="IPR002099">
    <property type="entry name" value="MutL/Mlh/PMS"/>
</dbReference>
<dbReference type="InterPro" id="IPR038973">
    <property type="entry name" value="MutL/Mlh/Pms-like"/>
</dbReference>
<dbReference type="InterPro" id="IPR014790">
    <property type="entry name" value="MutL_C"/>
</dbReference>
<dbReference type="InterPro" id="IPR042120">
    <property type="entry name" value="MutL_C_dimsub"/>
</dbReference>
<dbReference type="InterPro" id="IPR042121">
    <property type="entry name" value="MutL_C_regsub"/>
</dbReference>
<dbReference type="InterPro" id="IPR037198">
    <property type="entry name" value="MutL_C_sf"/>
</dbReference>
<dbReference type="InterPro" id="IPR020568">
    <property type="entry name" value="Ribosomal_Su5_D2-typ_SF"/>
</dbReference>
<dbReference type="InterPro" id="IPR014721">
    <property type="entry name" value="Ribsml_uS5_D2-typ_fold_subgr"/>
</dbReference>
<dbReference type="NCBIfam" id="TIGR00585">
    <property type="entry name" value="mutl"/>
    <property type="match status" value="1"/>
</dbReference>
<dbReference type="PANTHER" id="PTHR10073">
    <property type="entry name" value="DNA MISMATCH REPAIR PROTEIN MLH, PMS, MUTL"/>
    <property type="match status" value="1"/>
</dbReference>
<dbReference type="PANTHER" id="PTHR10073:SF12">
    <property type="entry name" value="DNA MISMATCH REPAIR PROTEIN MLH1"/>
    <property type="match status" value="1"/>
</dbReference>
<dbReference type="Pfam" id="PF01119">
    <property type="entry name" value="DNA_mis_repair"/>
    <property type="match status" value="1"/>
</dbReference>
<dbReference type="Pfam" id="PF13589">
    <property type="entry name" value="HATPase_c_3"/>
    <property type="match status" value="1"/>
</dbReference>
<dbReference type="Pfam" id="PF08676">
    <property type="entry name" value="MutL_C"/>
    <property type="match status" value="1"/>
</dbReference>
<dbReference type="SMART" id="SM01340">
    <property type="entry name" value="DNA_mis_repair"/>
    <property type="match status" value="1"/>
</dbReference>
<dbReference type="SMART" id="SM00853">
    <property type="entry name" value="MutL_C"/>
    <property type="match status" value="1"/>
</dbReference>
<dbReference type="SUPFAM" id="SSF55874">
    <property type="entry name" value="ATPase domain of HSP90 chaperone/DNA topoisomerase II/histidine kinase"/>
    <property type="match status" value="1"/>
</dbReference>
<dbReference type="SUPFAM" id="SSF118116">
    <property type="entry name" value="DNA mismatch repair protein MutL"/>
    <property type="match status" value="1"/>
</dbReference>
<dbReference type="SUPFAM" id="SSF54211">
    <property type="entry name" value="Ribosomal protein S5 domain 2-like"/>
    <property type="match status" value="1"/>
</dbReference>
<dbReference type="PROSITE" id="PS00058">
    <property type="entry name" value="DNA_MISMATCH_REPAIR_1"/>
    <property type="match status" value="1"/>
</dbReference>
<protein>
    <recommendedName>
        <fullName evidence="1">DNA mismatch repair protein MutL</fullName>
    </recommendedName>
</protein>
<name>MUTL_BACFR</name>
<keyword id="KW-0227">DNA damage</keyword>
<keyword id="KW-0234">DNA repair</keyword>
<proteinExistence type="inferred from homology"/>
<sequence>MSDIIHLLPDSVANQIAAGEVIQRPASVIKELVENAIDAEAQNIHVLVTDAGKTCIQVIDDGKGMSETDARLSFERHATSKIREASDLFALRTMGFRGEALASIAAVAQVELKTRPESEELGTKIIIAGSKVESQEAVSCPKGSNFSIKNLFFNIPARRKFLKANSTELSNILAEFERIALVHPEVAFSLYSNDSELFNLPACHLRQRILSVFGKKLNQQLLSVEVNTTMVKVSGYVAKPETARKKGAHQYFFVNGRYMRHPYFHKAVMDAYEQLIPAGEQISYFIYFEVDPANIDVNIHPTKTEIKFENEQAIWQILSASIKESLGKFNAVPSIDFDTEDMPDIPAFEQNLPPAPPKVHFNSDFNPFKPSSSSGGGNYSRPKVDWEDLYGGLEKASKMNQPFSDSDPESEEFAVIEEESIATAAPETLYAGELAVIEKGTQHLQFKGRFILTSVKSGLMLIDQHRAHIRVLFDRYRAQIQQKQGFSQGVLFPEILQLPASEAAVLQSIMDDLSAVGFDLSDLGGGSYAINGVPSGIDGLNPVDLVRSMLHTAMEKGNDVKEEIQDILALTLARAAAIVYGQVLSNEEMVSLVDNLFACPSPNYTPDGRVVLTTIKEEEIDKLFR</sequence>
<feature type="chain" id="PRO_1000058134" description="DNA mismatch repair protein MutL">
    <location>
        <begin position="1"/>
        <end position="625"/>
    </location>
</feature>
<evidence type="ECO:0000255" key="1">
    <source>
        <dbReference type="HAMAP-Rule" id="MF_00149"/>
    </source>
</evidence>
<organism>
    <name type="scientific">Bacteroides fragilis (strain YCH46)</name>
    <dbReference type="NCBI Taxonomy" id="295405"/>
    <lineage>
        <taxon>Bacteria</taxon>
        <taxon>Pseudomonadati</taxon>
        <taxon>Bacteroidota</taxon>
        <taxon>Bacteroidia</taxon>
        <taxon>Bacteroidales</taxon>
        <taxon>Bacteroidaceae</taxon>
        <taxon>Bacteroides</taxon>
    </lineage>
</organism>
<reference key="1">
    <citation type="journal article" date="2004" name="Proc. Natl. Acad. Sci. U.S.A.">
        <title>Genomic analysis of Bacteroides fragilis reveals extensive DNA inversions regulating cell surface adaptation.</title>
        <authorList>
            <person name="Kuwahara T."/>
            <person name="Yamashita A."/>
            <person name="Hirakawa H."/>
            <person name="Nakayama H."/>
            <person name="Toh H."/>
            <person name="Okada N."/>
            <person name="Kuhara S."/>
            <person name="Hattori M."/>
            <person name="Hayashi T."/>
            <person name="Ohnishi Y."/>
        </authorList>
    </citation>
    <scope>NUCLEOTIDE SEQUENCE [LARGE SCALE GENOMIC DNA]</scope>
    <source>
        <strain>YCH46</strain>
    </source>
</reference>